<protein>
    <recommendedName>
        <fullName>Protein PA-X</fullName>
    </recommendedName>
</protein>
<keyword id="KW-1132">Decay of host mRNAs by virus</keyword>
<keyword id="KW-1262">Eukaryotic host gene expression shutoff by virus</keyword>
<keyword id="KW-1035">Host cytoplasm</keyword>
<keyword id="KW-1190">Host gene expression shutoff by virus</keyword>
<keyword id="KW-1192">Host mRNA suppression by virus</keyword>
<keyword id="KW-1048">Host nucleus</keyword>
<keyword id="KW-0945">Host-virus interaction</keyword>
<keyword id="KW-0688">Ribosomal frameshifting</keyword>
<proteinExistence type="inferred from homology"/>
<evidence type="ECO:0000250" key="1">
    <source>
        <dbReference type="UniProtKB" id="P0CK64"/>
    </source>
</evidence>
<evidence type="ECO:0000250" key="2">
    <source>
        <dbReference type="UniProtKB" id="P0CK68"/>
    </source>
</evidence>
<evidence type="ECO:0000250" key="3">
    <source>
        <dbReference type="UniProtKB" id="P0DJW8"/>
    </source>
</evidence>
<evidence type="ECO:0000250" key="4">
    <source>
        <dbReference type="UniProtKB" id="P0DXO5"/>
    </source>
</evidence>
<evidence type="ECO:0000305" key="5"/>
<feature type="chain" id="PRO_0000419401" description="Protein PA-X">
    <location>
        <begin position="1"/>
        <end position="252"/>
    </location>
</feature>
<feature type="active site" evidence="2">
    <location>
        <position position="80"/>
    </location>
</feature>
<feature type="active site" evidence="2">
    <location>
        <position position="108"/>
    </location>
</feature>
<feature type="site" description="Important for efficient shutoff activity and nuclear localization" evidence="4">
    <location>
        <position position="195"/>
    </location>
</feature>
<feature type="site" description="Important for efficient shutoff activity and nuclear localization" evidence="4">
    <location>
        <position position="198"/>
    </location>
</feature>
<feature type="site" description="Important for efficient shutoff activity and nuclear localization" evidence="4">
    <location>
        <position position="199"/>
    </location>
</feature>
<feature type="site" description="Important for efficient shutoff activity" evidence="3">
    <location>
        <position position="202"/>
    </location>
</feature>
<feature type="site" description="Important for efficient shutoff activity" evidence="3">
    <location>
        <position position="203"/>
    </location>
</feature>
<feature type="site" description="Important for efficient shutoff activity" evidence="3">
    <location>
        <position position="206"/>
    </location>
</feature>
<comment type="function">
    <text evidence="1 4">Plays a major role in the shutoff of the host protein expression by cleaving mRNAs probably via an endonuclease activity. This host shutoff allows the virus to escape from the host antiviral response (By similarity). Hijacks host RNA splicing machinery to selectively target host RNAs containing introns for destruction. This may explain the preferential degradation of RNAs that have undergone co- or post-transcriptional processing (By similarity).</text>
</comment>
<comment type="subcellular location">
    <subcellularLocation>
        <location evidence="4">Host cytoplasm</location>
    </subcellularLocation>
    <subcellularLocation>
        <location evidence="4">Host nucleus</location>
    </subcellularLocation>
</comment>
<comment type="alternative products">
    <event type="ribosomal frameshifting"/>
    <isoform>
        <id>P0DJT8-1</id>
        <name>PA-X</name>
        <sequence type="displayed"/>
    </isoform>
    <isoform>
        <id>P13171-1</id>
        <name>PA</name>
        <sequence type="external"/>
    </isoform>
</comment>
<comment type="domain">
    <text evidence="1 4">The probable endonuclease active site in the N-terminus and the basic amino acid cluster in the C-terminus are important for the shutoff activity. The C-terminus acts as a nuclear localization signal (By similarity). The C-terminus is recruited to host protein complexes involved in nuclear Pol II RNA processing (By similarity).</text>
</comment>
<comment type="similarity">
    <text evidence="5">Belongs to the influenza viruses PA-X family.</text>
</comment>
<name>PAX_I79A1</name>
<organismHost>
    <name type="scientific">Aves</name>
    <dbReference type="NCBI Taxonomy" id="8782"/>
</organismHost>
<organismHost>
    <name type="scientific">Sus scrofa</name>
    <name type="common">Pig</name>
    <dbReference type="NCBI Taxonomy" id="9823"/>
</organismHost>
<accession>P0DJT8</accession>
<gene>
    <name type="primary">PA</name>
</gene>
<dbReference type="EMBL" id="M26085">
    <property type="status" value="NOT_ANNOTATED_CDS"/>
    <property type="molecule type" value="Genomic_RNA"/>
</dbReference>
<dbReference type="SMR" id="P0DJT8"/>
<dbReference type="GO" id="GO:0003723">
    <property type="term" value="F:RNA binding"/>
    <property type="evidence" value="ECO:0007669"/>
    <property type="project" value="InterPro"/>
</dbReference>
<dbReference type="GO" id="GO:0039694">
    <property type="term" value="P:viral RNA genome replication"/>
    <property type="evidence" value="ECO:0007669"/>
    <property type="project" value="InterPro"/>
</dbReference>
<dbReference type="GO" id="GO:0075523">
    <property type="term" value="P:viral translational frameshifting"/>
    <property type="evidence" value="ECO:0007669"/>
    <property type="project" value="UniProtKB-KW"/>
</dbReference>
<dbReference type="FunFam" id="3.40.91.90:FF:000001">
    <property type="entry name" value="Polymerase acidic protein"/>
    <property type="match status" value="1"/>
</dbReference>
<dbReference type="Gene3D" id="3.40.91.90">
    <property type="entry name" value="Influenza RNA-dependent RNA polymerase subunit PA, endonuclease domain"/>
    <property type="match status" value="1"/>
</dbReference>
<dbReference type="InterPro" id="IPR001009">
    <property type="entry name" value="PA/PA-X"/>
</dbReference>
<dbReference type="InterPro" id="IPR038372">
    <property type="entry name" value="PA/PA-X_sf"/>
</dbReference>
<dbReference type="Pfam" id="PF00603">
    <property type="entry name" value="Flu_PA"/>
    <property type="match status" value="1"/>
</dbReference>
<sequence>MEDFVRQCFNPMIVELAEKAMKEYGEDPKIETNKFAAICTHLEVCFMYSDFHFIDERGESIIVESGDPNALLKHRFEIMEGRDRTMAWTVVNSICNTTGVEKPKFLPDLYDYKENRFIEIGVTRREVHIYYLEKANKIKSEKTHIHIFSFTGEEMATKADYTLDEESRARIKTRLFTIRQEMASRGLWDSFVSPKEAKRQLKKDLKSQELCAGLPTKVSHRTSPALKTLEPMWMDSSRTAALRASFLKCQKK</sequence>
<organism>
    <name type="scientific">Influenza A virus (strain A/Pintail/Alberta/119/1979 H4N6)</name>
    <dbReference type="NCBI Taxonomy" id="384504"/>
    <lineage>
        <taxon>Viruses</taxon>
        <taxon>Riboviria</taxon>
        <taxon>Orthornavirae</taxon>
        <taxon>Negarnaviricota</taxon>
        <taxon>Polyploviricotina</taxon>
        <taxon>Insthoviricetes</taxon>
        <taxon>Articulavirales</taxon>
        <taxon>Orthomyxoviridae</taxon>
        <taxon>Alphainfluenzavirus</taxon>
        <taxon>Alphainfluenzavirus influenzae</taxon>
        <taxon>Influenza A virus</taxon>
    </lineage>
</organism>
<reference key="1">
    <citation type="journal article" date="1989" name="Virology">
        <title>Evolutionary pathways of the PA genes of influenza A viruses.</title>
        <authorList>
            <person name="Okazaki K."/>
            <person name="Kawaoka Y."/>
            <person name="Webster R.G."/>
        </authorList>
    </citation>
    <scope>NUCLEOTIDE SEQUENCE [GENOMIC RNA]</scope>
</reference>